<keyword id="KW-0002">3D-structure</keyword>
<keyword id="KW-0968">Cytoplasmic vesicle</keyword>
<keyword id="KW-0333">Golgi apparatus</keyword>
<keyword id="KW-0945">Host-virus interaction</keyword>
<keyword id="KW-0472">Membrane</keyword>
<keyword id="KW-0653">Protein transport</keyword>
<keyword id="KW-1267">Proteomics identification</keyword>
<keyword id="KW-1185">Reference proteome</keyword>
<keyword id="KW-0813">Transport</keyword>
<dbReference type="EMBL" id="AF092092">
    <property type="protein sequence ID" value="AAD20446.1"/>
    <property type="molecule type" value="mRNA"/>
</dbReference>
<dbReference type="EMBL" id="AK026983">
    <property type="protein sequence ID" value="BAB15614.1"/>
    <property type="molecule type" value="mRNA"/>
</dbReference>
<dbReference type="EMBL" id="AL731576">
    <property type="status" value="NOT_ANNOTATED_CDS"/>
    <property type="molecule type" value="Genomic_DNA"/>
</dbReference>
<dbReference type="EMBL" id="BC026232">
    <property type="protein sequence ID" value="AAH26232.1"/>
    <property type="molecule type" value="mRNA"/>
</dbReference>
<dbReference type="EMBL" id="BC067127">
    <property type="protein sequence ID" value="AAH67127.1"/>
    <property type="molecule type" value="mRNA"/>
</dbReference>
<dbReference type="CCDS" id="CCDS7342.1"/>
<dbReference type="RefSeq" id="NP_001307192.1">
    <property type="nucleotide sequence ID" value="NM_001320263.2"/>
</dbReference>
<dbReference type="RefSeq" id="NP_001307193.1">
    <property type="nucleotide sequence ID" value="NM_001320264.2"/>
</dbReference>
<dbReference type="RefSeq" id="NP_036227.1">
    <property type="nucleotide sequence ID" value="NM_012095.6"/>
</dbReference>
<dbReference type="RefSeq" id="NP_996895.1">
    <property type="nucleotide sequence ID" value="NM_207012.4"/>
</dbReference>
<dbReference type="RefSeq" id="XP_024303707.1">
    <property type="nucleotide sequence ID" value="XM_024447939.2"/>
</dbReference>
<dbReference type="RefSeq" id="XP_054221518.1">
    <property type="nucleotide sequence ID" value="XM_054365543.1"/>
</dbReference>
<dbReference type="PDB" id="9C58">
    <property type="method" value="EM"/>
    <property type="resolution" value="4.70 A"/>
    <property type="chains" value="M=1-418"/>
</dbReference>
<dbReference type="PDB" id="9C59">
    <property type="method" value="EM"/>
    <property type="resolution" value="4.30 A"/>
    <property type="chains" value="M/m=1-418"/>
</dbReference>
<dbReference type="PDB" id="9C5A">
    <property type="method" value="EM"/>
    <property type="resolution" value="4.20 A"/>
    <property type="chains" value="M/m=1-418"/>
</dbReference>
<dbReference type="PDB" id="9C5B">
    <property type="method" value="EM"/>
    <property type="resolution" value="4.50 A"/>
    <property type="chains" value="M=1-418"/>
</dbReference>
<dbReference type="PDB" id="9C5C">
    <property type="method" value="EM"/>
    <property type="resolution" value="3.60 A"/>
    <property type="chains" value="M=1-124"/>
</dbReference>
<dbReference type="PDBsum" id="9C58"/>
<dbReference type="PDBsum" id="9C59"/>
<dbReference type="PDBsum" id="9C5A"/>
<dbReference type="PDBsum" id="9C5B"/>
<dbReference type="PDBsum" id="9C5C"/>
<dbReference type="EMDB" id="EMD-45207"/>
<dbReference type="EMDB" id="EMD-45208"/>
<dbReference type="EMDB" id="EMD-45209"/>
<dbReference type="EMDB" id="EMD-45210"/>
<dbReference type="EMDB" id="EMD-45211"/>
<dbReference type="EMDB" id="EMD-45212"/>
<dbReference type="EMDB" id="EMD-45213"/>
<dbReference type="EMDB" id="EMD-45214"/>
<dbReference type="SMR" id="Q9Y2T2"/>
<dbReference type="BioGRID" id="117938">
    <property type="interactions" value="191"/>
</dbReference>
<dbReference type="ComplexPortal" id="CPX-5051">
    <property type="entry name" value="Ubiquitous AP-3 Adaptor complex, sigma3a variant"/>
</dbReference>
<dbReference type="ComplexPortal" id="CPX-5052">
    <property type="entry name" value="Ubiquitous AP-3 Adaptor complex, sigma3b variant"/>
</dbReference>
<dbReference type="CORUM" id="Q9Y2T2"/>
<dbReference type="FunCoup" id="Q9Y2T2">
    <property type="interactions" value="3037"/>
</dbReference>
<dbReference type="IntAct" id="Q9Y2T2">
    <property type="interactions" value="93"/>
</dbReference>
<dbReference type="MINT" id="Q9Y2T2"/>
<dbReference type="STRING" id="9606.ENSP00000347408"/>
<dbReference type="GlyGen" id="Q9Y2T2">
    <property type="glycosylation" value="1 site, 1 O-linked glycan (1 site)"/>
</dbReference>
<dbReference type="iPTMnet" id="Q9Y2T2"/>
<dbReference type="PhosphoSitePlus" id="Q9Y2T2"/>
<dbReference type="SwissPalm" id="Q9Y2T2"/>
<dbReference type="BioMuta" id="AP3M1"/>
<dbReference type="DMDM" id="13123952"/>
<dbReference type="jPOST" id="Q9Y2T2"/>
<dbReference type="MassIVE" id="Q9Y2T2"/>
<dbReference type="PaxDb" id="9606-ENSP00000347408"/>
<dbReference type="PeptideAtlas" id="Q9Y2T2"/>
<dbReference type="ProteomicsDB" id="85889"/>
<dbReference type="Pumba" id="Q9Y2T2"/>
<dbReference type="Antibodypedia" id="45437">
    <property type="antibodies" value="131 antibodies from 29 providers"/>
</dbReference>
<dbReference type="DNASU" id="26985"/>
<dbReference type="Ensembl" id="ENST00000355264.9">
    <property type="protein sequence ID" value="ENSP00000347408.4"/>
    <property type="gene ID" value="ENSG00000185009.13"/>
</dbReference>
<dbReference type="Ensembl" id="ENST00000372745.1">
    <property type="protein sequence ID" value="ENSP00000361831.1"/>
    <property type="gene ID" value="ENSG00000185009.13"/>
</dbReference>
<dbReference type="GeneID" id="26985"/>
<dbReference type="KEGG" id="hsa:26985"/>
<dbReference type="MANE-Select" id="ENST00000355264.9">
    <property type="protein sequence ID" value="ENSP00000347408.4"/>
    <property type="RefSeq nucleotide sequence ID" value="NM_012095.6"/>
    <property type="RefSeq protein sequence ID" value="NP_036227.1"/>
</dbReference>
<dbReference type="UCSC" id="uc001jwg.4">
    <property type="organism name" value="human"/>
</dbReference>
<dbReference type="AGR" id="HGNC:569"/>
<dbReference type="CTD" id="26985"/>
<dbReference type="DisGeNET" id="26985"/>
<dbReference type="GeneCards" id="AP3M1"/>
<dbReference type="HGNC" id="HGNC:569">
    <property type="gene designation" value="AP3M1"/>
</dbReference>
<dbReference type="HPA" id="ENSG00000185009">
    <property type="expression patterns" value="Low tissue specificity"/>
</dbReference>
<dbReference type="MIM" id="610366">
    <property type="type" value="gene"/>
</dbReference>
<dbReference type="neXtProt" id="NX_Q9Y2T2"/>
<dbReference type="OpenTargets" id="ENSG00000185009"/>
<dbReference type="PharmGKB" id="PA24860"/>
<dbReference type="VEuPathDB" id="HostDB:ENSG00000185009"/>
<dbReference type="eggNOG" id="KOG2740">
    <property type="taxonomic scope" value="Eukaryota"/>
</dbReference>
<dbReference type="GeneTree" id="ENSGT00940000158184"/>
<dbReference type="HOGENOM" id="CLU_026996_6_2_1"/>
<dbReference type="InParanoid" id="Q9Y2T2"/>
<dbReference type="OMA" id="CVKLLRF"/>
<dbReference type="OrthoDB" id="870at2759"/>
<dbReference type="PAN-GO" id="Q9Y2T2">
    <property type="GO annotations" value="2 GO annotations based on evolutionary models"/>
</dbReference>
<dbReference type="PhylomeDB" id="Q9Y2T2"/>
<dbReference type="TreeFam" id="TF315187"/>
<dbReference type="PathwayCommons" id="Q9Y2T2"/>
<dbReference type="Reactome" id="R-HSA-390471">
    <property type="pathway name" value="Association of TriC/CCT with target proteins during biosynthesis"/>
</dbReference>
<dbReference type="SignaLink" id="Q9Y2T2"/>
<dbReference type="SIGNOR" id="Q9Y2T2"/>
<dbReference type="BioGRID-ORCS" id="26985">
    <property type="hits" value="23 hits in 1157 CRISPR screens"/>
</dbReference>
<dbReference type="ChiTaRS" id="AP3M1">
    <property type="organism name" value="human"/>
</dbReference>
<dbReference type="GeneWiki" id="AP3M1"/>
<dbReference type="GenomeRNAi" id="26985"/>
<dbReference type="Pharos" id="Q9Y2T2">
    <property type="development level" value="Tbio"/>
</dbReference>
<dbReference type="PRO" id="PR:Q9Y2T2"/>
<dbReference type="Proteomes" id="UP000005640">
    <property type="component" value="Chromosome 10"/>
</dbReference>
<dbReference type="RNAct" id="Q9Y2T2">
    <property type="molecule type" value="protein"/>
</dbReference>
<dbReference type="Bgee" id="ENSG00000185009">
    <property type="expression patterns" value="Expressed in pancreatic ductal cell and 182 other cell types or tissues"/>
</dbReference>
<dbReference type="ExpressionAtlas" id="Q9Y2T2">
    <property type="expression patterns" value="baseline and differential"/>
</dbReference>
<dbReference type="GO" id="GO:0030123">
    <property type="term" value="C:AP-3 adaptor complex"/>
    <property type="evidence" value="ECO:0000303"/>
    <property type="project" value="ComplexPortal"/>
</dbReference>
<dbReference type="GO" id="GO:1904115">
    <property type="term" value="C:axon cytoplasm"/>
    <property type="evidence" value="ECO:0007669"/>
    <property type="project" value="GOC"/>
</dbReference>
<dbReference type="GO" id="GO:0030131">
    <property type="term" value="C:clathrin adaptor complex"/>
    <property type="evidence" value="ECO:0007669"/>
    <property type="project" value="InterPro"/>
</dbReference>
<dbReference type="GO" id="GO:0031410">
    <property type="term" value="C:cytoplasmic vesicle"/>
    <property type="evidence" value="ECO:0000318"/>
    <property type="project" value="GO_Central"/>
</dbReference>
<dbReference type="GO" id="GO:0030659">
    <property type="term" value="C:cytoplasmic vesicle membrane"/>
    <property type="evidence" value="ECO:0007669"/>
    <property type="project" value="UniProtKB-SubCell"/>
</dbReference>
<dbReference type="GO" id="GO:0005769">
    <property type="term" value="C:early endosome"/>
    <property type="evidence" value="ECO:0000303"/>
    <property type="project" value="ComplexPortal"/>
</dbReference>
<dbReference type="GO" id="GO:0005794">
    <property type="term" value="C:Golgi apparatus"/>
    <property type="evidence" value="ECO:0007669"/>
    <property type="project" value="UniProtKB-SubCell"/>
</dbReference>
<dbReference type="GO" id="GO:0005765">
    <property type="term" value="C:lysosomal membrane"/>
    <property type="evidence" value="ECO:0007005"/>
    <property type="project" value="UniProtKB"/>
</dbReference>
<dbReference type="GO" id="GO:0005764">
    <property type="term" value="C:lysosome"/>
    <property type="evidence" value="ECO:0000304"/>
    <property type="project" value="ProtInc"/>
</dbReference>
<dbReference type="GO" id="GO:0098837">
    <property type="term" value="C:postsynaptic recycling endosome"/>
    <property type="evidence" value="ECO:0007669"/>
    <property type="project" value="Ensembl"/>
</dbReference>
<dbReference type="GO" id="GO:0031267">
    <property type="term" value="F:small GTPase binding"/>
    <property type="evidence" value="ECO:0000353"/>
    <property type="project" value="ParkinsonsUK-UCL"/>
</dbReference>
<dbReference type="GO" id="GO:0008089">
    <property type="term" value="P:anterograde axonal transport"/>
    <property type="evidence" value="ECO:0000250"/>
    <property type="project" value="UniProtKB"/>
</dbReference>
<dbReference type="GO" id="GO:0048490">
    <property type="term" value="P:anterograde synaptic vesicle transport"/>
    <property type="evidence" value="ECO:0000250"/>
    <property type="project" value="UniProtKB"/>
</dbReference>
<dbReference type="GO" id="GO:0035654">
    <property type="term" value="P:clathrin-coated vesicle cargo loading, AP-3-mediated"/>
    <property type="evidence" value="ECO:0000303"/>
    <property type="project" value="ComplexPortal"/>
</dbReference>
<dbReference type="GO" id="GO:0006897">
    <property type="term" value="P:endocytosis"/>
    <property type="evidence" value="ECO:0000318"/>
    <property type="project" value="GO_Central"/>
</dbReference>
<dbReference type="GO" id="GO:0046907">
    <property type="term" value="P:intracellular transport"/>
    <property type="evidence" value="ECO:0000303"/>
    <property type="project" value="ComplexPortal"/>
</dbReference>
<dbReference type="GO" id="GO:1903232">
    <property type="term" value="P:melanosome assembly"/>
    <property type="evidence" value="ECO:0000303"/>
    <property type="project" value="ComplexPortal"/>
</dbReference>
<dbReference type="GO" id="GO:0060155">
    <property type="term" value="P:platelet dense granule organization"/>
    <property type="evidence" value="ECO:0000303"/>
    <property type="project" value="ComplexPortal"/>
</dbReference>
<dbReference type="GO" id="GO:0098884">
    <property type="term" value="P:postsynaptic neurotransmitter receptor internalization"/>
    <property type="evidence" value="ECO:0007669"/>
    <property type="project" value="Ensembl"/>
</dbReference>
<dbReference type="GO" id="GO:0006622">
    <property type="term" value="P:protein targeting to lysosome"/>
    <property type="evidence" value="ECO:0000304"/>
    <property type="project" value="ProtInc"/>
</dbReference>
<dbReference type="GO" id="GO:0016192">
    <property type="term" value="P:vesicle-mediated transport"/>
    <property type="evidence" value="ECO:0000303"/>
    <property type="project" value="ComplexPortal"/>
</dbReference>
<dbReference type="CDD" id="cd09260">
    <property type="entry name" value="AP-3_Mu3A_Cterm"/>
    <property type="match status" value="1"/>
</dbReference>
<dbReference type="CDD" id="cd14837">
    <property type="entry name" value="AP3_Mu_N"/>
    <property type="match status" value="1"/>
</dbReference>
<dbReference type="FunFam" id="3.30.450.60:FF:000012">
    <property type="entry name" value="AP-3 complex subunit mu-1 isoform X1"/>
    <property type="match status" value="1"/>
</dbReference>
<dbReference type="FunFam" id="2.60.40.1170:FF:000006">
    <property type="entry name" value="Putative AP-3 complex subunit mu-2-like"/>
    <property type="match status" value="1"/>
</dbReference>
<dbReference type="Gene3D" id="3.30.450.60">
    <property type="match status" value="1"/>
</dbReference>
<dbReference type="Gene3D" id="2.60.40.1170">
    <property type="entry name" value="Mu homology domain, subdomain B"/>
    <property type="match status" value="2"/>
</dbReference>
<dbReference type="InterPro" id="IPR050431">
    <property type="entry name" value="Adaptor_comp_med_subunit"/>
</dbReference>
<dbReference type="InterPro" id="IPR036168">
    <property type="entry name" value="AP2_Mu_C_sf"/>
</dbReference>
<dbReference type="InterPro" id="IPR022775">
    <property type="entry name" value="AP_mu_sigma_su"/>
</dbReference>
<dbReference type="InterPro" id="IPR001392">
    <property type="entry name" value="Clathrin_mu"/>
</dbReference>
<dbReference type="InterPro" id="IPR018240">
    <property type="entry name" value="Clathrin_mu_CS"/>
</dbReference>
<dbReference type="InterPro" id="IPR011012">
    <property type="entry name" value="Longin-like_dom_sf"/>
</dbReference>
<dbReference type="InterPro" id="IPR028565">
    <property type="entry name" value="MHD"/>
</dbReference>
<dbReference type="PANTHER" id="PTHR10529">
    <property type="entry name" value="AP COMPLEX SUBUNIT MU"/>
    <property type="match status" value="1"/>
</dbReference>
<dbReference type="Pfam" id="PF00928">
    <property type="entry name" value="Adap_comp_sub"/>
    <property type="match status" value="1"/>
</dbReference>
<dbReference type="Pfam" id="PF01217">
    <property type="entry name" value="Clat_adaptor_s"/>
    <property type="match status" value="1"/>
</dbReference>
<dbReference type="PIRSF" id="PIRSF005992">
    <property type="entry name" value="Clathrin_mu"/>
    <property type="match status" value="1"/>
</dbReference>
<dbReference type="PRINTS" id="PR00314">
    <property type="entry name" value="CLATHRINADPT"/>
</dbReference>
<dbReference type="SUPFAM" id="SSF49447">
    <property type="entry name" value="Second domain of Mu2 adaptin subunit (ap50) of ap2 adaptor"/>
    <property type="match status" value="1"/>
</dbReference>
<dbReference type="SUPFAM" id="SSF64356">
    <property type="entry name" value="SNARE-like"/>
    <property type="match status" value="1"/>
</dbReference>
<dbReference type="PROSITE" id="PS00990">
    <property type="entry name" value="CLAT_ADAPTOR_M_1"/>
    <property type="match status" value="1"/>
</dbReference>
<dbReference type="PROSITE" id="PS00991">
    <property type="entry name" value="CLAT_ADAPTOR_M_2"/>
    <property type="match status" value="1"/>
</dbReference>
<dbReference type="PROSITE" id="PS51072">
    <property type="entry name" value="MHD"/>
    <property type="match status" value="1"/>
</dbReference>
<comment type="function">
    <text>Part of the AP-3 complex, an adaptor-related complex which is not clathrin-associated. The complex is associated with the Golgi region as well as more peripheral structures. It facilitates the budding of vesicles from the Golgi membrane and may be directly involved in trafficking to lysosomes. In concert with the BLOC-1 complex, AP-3 is required to target cargos into vesicles assembled at cell bodies for delivery into neurites and nerve terminals.</text>
</comment>
<comment type="subunit">
    <text evidence="1">Adaptor protein complex 3 (AP-3) is a heterotetramer composed of two large adaptins (delta-type subunit AP3D1 and beta-type subunit AP3B1 or AP3B2), a medium adaptin (mu-type subunit AP3M1 or AP3M2) and a small adaptin (sigma-type subunit APS1 or AP3S2). Interacts with AGAP1. AP-3 associates with the BLOC-1 complex (By similarity).</text>
</comment>
<comment type="subunit">
    <text evidence="3">(Microbial infection) Interacts with human respiratory virus (HRSV) matrix protein; this interaction plays an essential role in trafficking the matrix protein in host cells.</text>
</comment>
<comment type="interaction">
    <interactant intactId="EBI-2371151">
        <id>Q9Y2T2</id>
    </interactant>
    <interactant intactId="EBI-741181">
        <id>Q6RW13</id>
        <label>AGTRAP</label>
    </interactant>
    <organismsDiffer>false</organismsDiffer>
    <experiments>3</experiments>
</comment>
<comment type="interaction">
    <interactant intactId="EBI-2371151">
        <id>Q9Y2T2</id>
    </interactant>
    <interactant intactId="EBI-11522760">
        <id>Q6RW13-2</id>
        <label>AGTRAP</label>
    </interactant>
    <organismsDiffer>false</organismsDiffer>
    <experiments>3</experiments>
</comment>
<comment type="interaction">
    <interactant intactId="EBI-2371151">
        <id>Q9Y2T2</id>
    </interactant>
    <interactant intactId="EBI-765971">
        <id>Q9HBZ2</id>
        <label>ARNT2</label>
    </interactant>
    <organismsDiffer>false</organismsDiffer>
    <experiments>3</experiments>
</comment>
<comment type="interaction">
    <interactant intactId="EBI-2371151">
        <id>Q9Y2T2</id>
    </interactant>
    <interactant intactId="EBI-473101">
        <id>Q14194</id>
        <label>CRMP1</label>
    </interactant>
    <organismsDiffer>false</organismsDiffer>
    <experiments>6</experiments>
</comment>
<comment type="interaction">
    <interactant intactId="EBI-2371151">
        <id>Q9Y2T2</id>
    </interactant>
    <interactant intactId="EBI-739789">
        <id>Q92997</id>
        <label>DVL3</label>
    </interactant>
    <organismsDiffer>false</organismsDiffer>
    <experiments>3</experiments>
</comment>
<comment type="interaction">
    <interactant intactId="EBI-2371151">
        <id>Q9Y2T2</id>
    </interactant>
    <interactant intactId="EBI-13213391">
        <id>Q96NE9-2</id>
        <label>FRMD6</label>
    </interactant>
    <organismsDiffer>false</organismsDiffer>
    <experiments>3</experiments>
</comment>
<comment type="interaction">
    <interactant intactId="EBI-2371151">
        <id>Q9Y2T2</id>
    </interactant>
    <interactant intactId="EBI-2877138">
        <id>P28068</id>
        <label>HLA-DMB</label>
    </interactant>
    <organismsDiffer>false</organismsDiffer>
    <experiments>2</experiments>
</comment>
<comment type="interaction">
    <interactant intactId="EBI-2371151">
        <id>Q9Y2T2</id>
    </interactant>
    <interactant intactId="EBI-466029">
        <id>P42858</id>
        <label>HTT</label>
    </interactant>
    <organismsDiffer>false</organismsDiffer>
    <experiments>3</experiments>
</comment>
<comment type="interaction">
    <interactant intactId="EBI-2371151">
        <id>Q9Y2T2</id>
    </interactant>
    <interactant intactId="EBI-465156">
        <id>Q9UBH0</id>
        <label>IL36RN</label>
    </interactant>
    <organismsDiffer>false</organismsDiffer>
    <experiments>3</experiments>
</comment>
<comment type="interaction">
    <interactant intactId="EBI-2371151">
        <id>Q9Y2T2</id>
    </interactant>
    <interactant intactId="EBI-748350">
        <id>Q9UHP6</id>
        <label>RSPH14</label>
    </interactant>
    <organismsDiffer>false</organismsDiffer>
    <experiments>13</experiments>
</comment>
<comment type="interaction">
    <interactant intactId="EBI-2371151">
        <id>Q9Y2T2</id>
    </interactant>
    <interactant intactId="EBI-10326741">
        <id>Q9P2F8-2</id>
        <label>SIPA1L2</label>
    </interactant>
    <organismsDiffer>false</organismsDiffer>
    <experiments>6</experiments>
</comment>
<comment type="interaction">
    <interactant intactId="EBI-2371151">
        <id>Q9Y2T2</id>
    </interactant>
    <interactant intactId="EBI-7244836">
        <id>Q9UP95</id>
        <label>SLC12A4</label>
    </interactant>
    <organismsDiffer>false</organismsDiffer>
    <experiments>3</experiments>
</comment>
<comment type="interaction">
    <interactant intactId="EBI-2371151">
        <id>Q9Y2T2</id>
    </interactant>
    <interactant intactId="EBI-11946259">
        <id>Q8N0X2-4</id>
        <label>SPAG16</label>
    </interactant>
    <organismsDiffer>false</organismsDiffer>
    <experiments>3</experiments>
</comment>
<comment type="interaction">
    <interactant intactId="EBI-2371151">
        <id>Q9Y2T2</id>
    </interactant>
    <interactant intactId="EBI-740098">
        <id>P36406</id>
        <label>TRIM23</label>
    </interactant>
    <organismsDiffer>false</organismsDiffer>
    <experiments>3</experiments>
</comment>
<comment type="interaction">
    <interactant intactId="EBI-2371151">
        <id>Q9Y2T2</id>
    </interactant>
    <interactant intactId="EBI-720828">
        <id>Q9C026</id>
        <label>TRIM9</label>
    </interactant>
    <organismsDiffer>false</organismsDiffer>
    <experiments>3</experiments>
</comment>
<comment type="subcellular location">
    <subcellularLocation>
        <location>Golgi apparatus</location>
    </subcellularLocation>
    <subcellularLocation>
        <location evidence="1">Cytoplasmic vesicle membrane</location>
        <topology evidence="1">Peripheral membrane protein</topology>
        <orientation evidence="1">Cytoplasmic side</orientation>
    </subcellularLocation>
    <text evidence="1">Component of the coat surrounding the cytoplasmic face of coated vesicles located at the Golgi complex.</text>
</comment>
<comment type="similarity">
    <text evidence="4">Belongs to the adaptor complexes medium subunit family.</text>
</comment>
<reference key="1">
    <citation type="journal article" date="1999" name="Mol. Cell">
        <title>Altered trafficking of lysosomal proteins in Hermansky-Pudlak syndrome due to mutations in the beta 3A subunit of the AP-3 adaptor.</title>
        <authorList>
            <person name="Dell'Angelica E.C."/>
            <person name="Shotelersuk V."/>
            <person name="Aguilar R.C."/>
            <person name="Gahl W.A."/>
            <person name="Bonifacino J.S."/>
        </authorList>
    </citation>
    <scope>NUCLEOTIDE SEQUENCE [MRNA]</scope>
    <source>
        <tissue>Peripheral blood</tissue>
        <tissue>Skin fibroblast</tissue>
    </source>
</reference>
<reference key="2">
    <citation type="journal article" date="2004" name="Nat. Genet.">
        <title>Complete sequencing and characterization of 21,243 full-length human cDNAs.</title>
        <authorList>
            <person name="Ota T."/>
            <person name="Suzuki Y."/>
            <person name="Nishikawa T."/>
            <person name="Otsuki T."/>
            <person name="Sugiyama T."/>
            <person name="Irie R."/>
            <person name="Wakamatsu A."/>
            <person name="Hayashi K."/>
            <person name="Sato H."/>
            <person name="Nagai K."/>
            <person name="Kimura K."/>
            <person name="Makita H."/>
            <person name="Sekine M."/>
            <person name="Obayashi M."/>
            <person name="Nishi T."/>
            <person name="Shibahara T."/>
            <person name="Tanaka T."/>
            <person name="Ishii S."/>
            <person name="Yamamoto J."/>
            <person name="Saito K."/>
            <person name="Kawai Y."/>
            <person name="Isono Y."/>
            <person name="Nakamura Y."/>
            <person name="Nagahari K."/>
            <person name="Murakami K."/>
            <person name="Yasuda T."/>
            <person name="Iwayanagi T."/>
            <person name="Wagatsuma M."/>
            <person name="Shiratori A."/>
            <person name="Sudo H."/>
            <person name="Hosoiri T."/>
            <person name="Kaku Y."/>
            <person name="Kodaira H."/>
            <person name="Kondo H."/>
            <person name="Sugawara M."/>
            <person name="Takahashi M."/>
            <person name="Kanda K."/>
            <person name="Yokoi T."/>
            <person name="Furuya T."/>
            <person name="Kikkawa E."/>
            <person name="Omura Y."/>
            <person name="Abe K."/>
            <person name="Kamihara K."/>
            <person name="Katsuta N."/>
            <person name="Sato K."/>
            <person name="Tanikawa M."/>
            <person name="Yamazaki M."/>
            <person name="Ninomiya K."/>
            <person name="Ishibashi T."/>
            <person name="Yamashita H."/>
            <person name="Murakawa K."/>
            <person name="Fujimori K."/>
            <person name="Tanai H."/>
            <person name="Kimata M."/>
            <person name="Watanabe M."/>
            <person name="Hiraoka S."/>
            <person name="Chiba Y."/>
            <person name="Ishida S."/>
            <person name="Ono Y."/>
            <person name="Takiguchi S."/>
            <person name="Watanabe S."/>
            <person name="Yosida M."/>
            <person name="Hotuta T."/>
            <person name="Kusano J."/>
            <person name="Kanehori K."/>
            <person name="Takahashi-Fujii A."/>
            <person name="Hara H."/>
            <person name="Tanase T.-O."/>
            <person name="Nomura Y."/>
            <person name="Togiya S."/>
            <person name="Komai F."/>
            <person name="Hara R."/>
            <person name="Takeuchi K."/>
            <person name="Arita M."/>
            <person name="Imose N."/>
            <person name="Musashino K."/>
            <person name="Yuuki H."/>
            <person name="Oshima A."/>
            <person name="Sasaki N."/>
            <person name="Aotsuka S."/>
            <person name="Yoshikawa Y."/>
            <person name="Matsunawa H."/>
            <person name="Ichihara T."/>
            <person name="Shiohata N."/>
            <person name="Sano S."/>
            <person name="Moriya S."/>
            <person name="Momiyama H."/>
            <person name="Satoh N."/>
            <person name="Takami S."/>
            <person name="Terashima Y."/>
            <person name="Suzuki O."/>
            <person name="Nakagawa S."/>
            <person name="Senoh A."/>
            <person name="Mizoguchi H."/>
            <person name="Goto Y."/>
            <person name="Shimizu F."/>
            <person name="Wakebe H."/>
            <person name="Hishigaki H."/>
            <person name="Watanabe T."/>
            <person name="Sugiyama A."/>
            <person name="Takemoto M."/>
            <person name="Kawakami B."/>
            <person name="Yamazaki M."/>
            <person name="Watanabe K."/>
            <person name="Kumagai A."/>
            <person name="Itakura S."/>
            <person name="Fukuzumi Y."/>
            <person name="Fujimori Y."/>
            <person name="Komiyama M."/>
            <person name="Tashiro H."/>
            <person name="Tanigami A."/>
            <person name="Fujiwara T."/>
            <person name="Ono T."/>
            <person name="Yamada K."/>
            <person name="Fujii Y."/>
            <person name="Ozaki K."/>
            <person name="Hirao M."/>
            <person name="Ohmori Y."/>
            <person name="Kawabata A."/>
            <person name="Hikiji T."/>
            <person name="Kobatake N."/>
            <person name="Inagaki H."/>
            <person name="Ikema Y."/>
            <person name="Okamoto S."/>
            <person name="Okitani R."/>
            <person name="Kawakami T."/>
            <person name="Noguchi S."/>
            <person name="Itoh T."/>
            <person name="Shigeta K."/>
            <person name="Senba T."/>
            <person name="Matsumura K."/>
            <person name="Nakajima Y."/>
            <person name="Mizuno T."/>
            <person name="Morinaga M."/>
            <person name="Sasaki M."/>
            <person name="Togashi T."/>
            <person name="Oyama M."/>
            <person name="Hata H."/>
            <person name="Watanabe M."/>
            <person name="Komatsu T."/>
            <person name="Mizushima-Sugano J."/>
            <person name="Satoh T."/>
            <person name="Shirai Y."/>
            <person name="Takahashi Y."/>
            <person name="Nakagawa K."/>
            <person name="Okumura K."/>
            <person name="Nagase T."/>
            <person name="Nomura N."/>
            <person name="Kikuchi H."/>
            <person name="Masuho Y."/>
            <person name="Yamashita R."/>
            <person name="Nakai K."/>
            <person name="Yada T."/>
            <person name="Nakamura Y."/>
            <person name="Ohara O."/>
            <person name="Isogai T."/>
            <person name="Sugano S."/>
        </authorList>
    </citation>
    <scope>NUCLEOTIDE SEQUENCE [LARGE SCALE MRNA]</scope>
</reference>
<reference key="3">
    <citation type="journal article" date="2004" name="Nature">
        <title>The DNA sequence and comparative analysis of human chromosome 10.</title>
        <authorList>
            <person name="Deloukas P."/>
            <person name="Earthrowl M.E."/>
            <person name="Grafham D.V."/>
            <person name="Rubenfield M."/>
            <person name="French L."/>
            <person name="Steward C.A."/>
            <person name="Sims S.K."/>
            <person name="Jones M.C."/>
            <person name="Searle S."/>
            <person name="Scott C."/>
            <person name="Howe K."/>
            <person name="Hunt S.E."/>
            <person name="Andrews T.D."/>
            <person name="Gilbert J.G.R."/>
            <person name="Swarbreck D."/>
            <person name="Ashurst J.L."/>
            <person name="Taylor A."/>
            <person name="Battles J."/>
            <person name="Bird C.P."/>
            <person name="Ainscough R."/>
            <person name="Almeida J.P."/>
            <person name="Ashwell R.I.S."/>
            <person name="Ambrose K.D."/>
            <person name="Babbage A.K."/>
            <person name="Bagguley C.L."/>
            <person name="Bailey J."/>
            <person name="Banerjee R."/>
            <person name="Bates K."/>
            <person name="Beasley H."/>
            <person name="Bray-Allen S."/>
            <person name="Brown A.J."/>
            <person name="Brown J.Y."/>
            <person name="Burford D.C."/>
            <person name="Burrill W."/>
            <person name="Burton J."/>
            <person name="Cahill P."/>
            <person name="Camire D."/>
            <person name="Carter N.P."/>
            <person name="Chapman J.C."/>
            <person name="Clark S.Y."/>
            <person name="Clarke G."/>
            <person name="Clee C.M."/>
            <person name="Clegg S."/>
            <person name="Corby N."/>
            <person name="Coulson A."/>
            <person name="Dhami P."/>
            <person name="Dutta I."/>
            <person name="Dunn M."/>
            <person name="Faulkner L."/>
            <person name="Frankish A."/>
            <person name="Frankland J.A."/>
            <person name="Garner P."/>
            <person name="Garnett J."/>
            <person name="Gribble S."/>
            <person name="Griffiths C."/>
            <person name="Grocock R."/>
            <person name="Gustafson E."/>
            <person name="Hammond S."/>
            <person name="Harley J.L."/>
            <person name="Hart E."/>
            <person name="Heath P.D."/>
            <person name="Ho T.P."/>
            <person name="Hopkins B."/>
            <person name="Horne J."/>
            <person name="Howden P.J."/>
            <person name="Huckle E."/>
            <person name="Hynds C."/>
            <person name="Johnson C."/>
            <person name="Johnson D."/>
            <person name="Kana A."/>
            <person name="Kay M."/>
            <person name="Kimberley A.M."/>
            <person name="Kershaw J.K."/>
            <person name="Kokkinaki M."/>
            <person name="Laird G.K."/>
            <person name="Lawlor S."/>
            <person name="Lee H.M."/>
            <person name="Leongamornlert D.A."/>
            <person name="Laird G."/>
            <person name="Lloyd C."/>
            <person name="Lloyd D.M."/>
            <person name="Loveland J."/>
            <person name="Lovell J."/>
            <person name="McLaren S."/>
            <person name="McLay K.E."/>
            <person name="McMurray A."/>
            <person name="Mashreghi-Mohammadi M."/>
            <person name="Matthews L."/>
            <person name="Milne S."/>
            <person name="Nickerson T."/>
            <person name="Nguyen M."/>
            <person name="Overton-Larty E."/>
            <person name="Palmer S.A."/>
            <person name="Pearce A.V."/>
            <person name="Peck A.I."/>
            <person name="Pelan S."/>
            <person name="Phillimore B."/>
            <person name="Porter K."/>
            <person name="Rice C.M."/>
            <person name="Rogosin A."/>
            <person name="Ross M.T."/>
            <person name="Sarafidou T."/>
            <person name="Sehra H.K."/>
            <person name="Shownkeen R."/>
            <person name="Skuce C.D."/>
            <person name="Smith M."/>
            <person name="Standring L."/>
            <person name="Sycamore N."/>
            <person name="Tester J."/>
            <person name="Thorpe A."/>
            <person name="Torcasso W."/>
            <person name="Tracey A."/>
            <person name="Tromans A."/>
            <person name="Tsolas J."/>
            <person name="Wall M."/>
            <person name="Walsh J."/>
            <person name="Wang H."/>
            <person name="Weinstock K."/>
            <person name="West A.P."/>
            <person name="Willey D.L."/>
            <person name="Whitehead S.L."/>
            <person name="Wilming L."/>
            <person name="Wray P.W."/>
            <person name="Young L."/>
            <person name="Chen Y."/>
            <person name="Lovering R.C."/>
            <person name="Moschonas N.K."/>
            <person name="Siebert R."/>
            <person name="Fechtel K."/>
            <person name="Bentley D."/>
            <person name="Durbin R.M."/>
            <person name="Hubbard T."/>
            <person name="Doucette-Stamm L."/>
            <person name="Beck S."/>
            <person name="Smith D.R."/>
            <person name="Rogers J."/>
        </authorList>
    </citation>
    <scope>NUCLEOTIDE SEQUENCE [LARGE SCALE GENOMIC DNA]</scope>
</reference>
<reference key="4">
    <citation type="journal article" date="2004" name="Genome Res.">
        <title>The status, quality, and expansion of the NIH full-length cDNA project: the Mammalian Gene Collection (MGC).</title>
        <authorList>
            <consortium name="The MGC Project Team"/>
        </authorList>
    </citation>
    <scope>NUCLEOTIDE SEQUENCE [LARGE SCALE MRNA]</scope>
    <source>
        <tissue>Eye</tissue>
        <tissue>Prostate</tissue>
    </source>
</reference>
<reference key="5">
    <citation type="journal article" date="2011" name="BMC Syst. Biol.">
        <title>Initial characterization of the human central proteome.</title>
        <authorList>
            <person name="Burkard T.R."/>
            <person name="Planyavsky M."/>
            <person name="Kaupe I."/>
            <person name="Breitwieser F.P."/>
            <person name="Buerckstuemmer T."/>
            <person name="Bennett K.L."/>
            <person name="Superti-Furga G."/>
            <person name="Colinge J."/>
        </authorList>
    </citation>
    <scope>IDENTIFICATION BY MASS SPECTROMETRY [LARGE SCALE ANALYSIS]</scope>
</reference>
<reference key="6">
    <citation type="journal article" date="2017" name="PLoS ONE">
        <title>Interaction of the Human Respiratory Syncytial Virus matrix protein with cellular adaptor protein complex 3 plays a critical role in trafficking.</title>
        <authorList>
            <person name="Ward C."/>
            <person name="Maselko M."/>
            <person name="Lupfer C."/>
            <person name="Prescott M."/>
            <person name="Pastey M.K."/>
        </authorList>
    </citation>
    <scope>INTERACTION WITH HRSV MATRIX PROTEIN (MICROBIAL INFECTION)</scope>
</reference>
<proteinExistence type="evidence at protein level"/>
<sequence length="418" mass="46939">MIHSLFLINCSGDIFLEKHWKSVVSQSVCDYFFEAQEKAADVENVPPVISTPHHYLISIYRDKLFFVSVIQTEVPPLFVIEFLHRVADTFQDYFGECSEAAIKDNVVIVYELLEEMLDNGFPLATESNILKELIKPPTILRSVVNSITGSSNVGDTLPTGQLSNIPWRRAGVKYTNNEAYFDVVEEIDAIIDKSGSTVFAEIQGVIDACIKLSGMPDLSLSFMNPRLLDDVSFHPCIRFKRWESERVLSFIPPDGNFRLISYRVSSQNLVAIPVYVKHSISFKENSSCGRFDITIGPKQNMGKTIEGITVTVHMPKVVLNMNLTPTQGSYTFDPVTKVLTWDVGKITPQKLPSLKGLVNLQSGAPKPEENPSLNIQFKIQQLAISGLKVNRLDMYGEKYKPFKGVKYVTKAGKFQVRT</sequence>
<evidence type="ECO:0000250" key="1"/>
<evidence type="ECO:0000255" key="2">
    <source>
        <dbReference type="PROSITE-ProRule" id="PRU00404"/>
    </source>
</evidence>
<evidence type="ECO:0000269" key="3">
    <source>
    </source>
</evidence>
<evidence type="ECO:0000305" key="4"/>
<name>AP3M1_HUMAN</name>
<accession>Q9Y2T2</accession>
<accession>Q5JQ12</accession>
<accession>Q9H5L2</accession>
<organism>
    <name type="scientific">Homo sapiens</name>
    <name type="common">Human</name>
    <dbReference type="NCBI Taxonomy" id="9606"/>
    <lineage>
        <taxon>Eukaryota</taxon>
        <taxon>Metazoa</taxon>
        <taxon>Chordata</taxon>
        <taxon>Craniata</taxon>
        <taxon>Vertebrata</taxon>
        <taxon>Euteleostomi</taxon>
        <taxon>Mammalia</taxon>
        <taxon>Eutheria</taxon>
        <taxon>Euarchontoglires</taxon>
        <taxon>Primates</taxon>
        <taxon>Haplorrhini</taxon>
        <taxon>Catarrhini</taxon>
        <taxon>Hominidae</taxon>
        <taxon>Homo</taxon>
    </lineage>
</organism>
<gene>
    <name type="primary">AP3M1</name>
</gene>
<feature type="chain" id="PRO_0000193781" description="AP-3 complex subunit mu-1">
    <location>
        <begin position="1"/>
        <end position="418"/>
    </location>
</feature>
<feature type="domain" description="MHD" evidence="2">
    <location>
        <begin position="176"/>
        <end position="417"/>
    </location>
</feature>
<feature type="sequence conflict" description="In Ref. 2; BAB15614." evidence="4" ref="2">
    <original>G</original>
    <variation>V</variation>
    <location>
        <position position="160"/>
    </location>
</feature>
<feature type="sequence conflict" description="In Ref. 2; BAB15614." evidence="4" ref="2">
    <original>N</original>
    <variation>D</variation>
    <location>
        <position position="285"/>
    </location>
</feature>
<protein>
    <recommendedName>
        <fullName>AP-3 complex subunit mu-1</fullName>
    </recommendedName>
    <alternativeName>
        <fullName>AP-3 adaptor complex mu3A subunit</fullName>
    </alternativeName>
    <alternativeName>
        <fullName>Adaptor-related protein complex 3 subunit mu-1</fullName>
    </alternativeName>
    <alternativeName>
        <fullName>Mu-adaptin 3A</fullName>
    </alternativeName>
    <alternativeName>
        <fullName>Mu3A-adaptin</fullName>
    </alternativeName>
</protein>